<organism>
    <name type="scientific">Crucihimalaya wallichii</name>
    <name type="common">Rock-cress</name>
    <name type="synonym">Arabidopsis campestris</name>
    <dbReference type="NCBI Taxonomy" id="78192"/>
    <lineage>
        <taxon>Eukaryota</taxon>
        <taxon>Viridiplantae</taxon>
        <taxon>Streptophyta</taxon>
        <taxon>Embryophyta</taxon>
        <taxon>Tracheophyta</taxon>
        <taxon>Spermatophyta</taxon>
        <taxon>Magnoliopsida</taxon>
        <taxon>eudicotyledons</taxon>
        <taxon>Gunneridae</taxon>
        <taxon>Pentapetalae</taxon>
        <taxon>rosids</taxon>
        <taxon>malvids</taxon>
        <taxon>Brassicales</taxon>
        <taxon>Brassicaceae</taxon>
        <taxon>Crucihimalayeae</taxon>
        <taxon>Crucihimalaya</taxon>
    </lineage>
</organism>
<sequence length="120" mass="13839">MFLLYEYDIFWAFLIISSAIPVLAFLISGVLSPIRKGPEKLSSYESGIEPIGDAWLQFRIRYYMFALVFVVFDVETVFLYPWAMSFDVLGVSAFIEAFIFVLILILGLVYAWRKGALEWS</sequence>
<geneLocation type="chloroplast"/>
<dbReference type="EC" id="7.1.1.-" evidence="1"/>
<dbReference type="EMBL" id="AP009372">
    <property type="protein sequence ID" value="BAF50291.1"/>
    <property type="molecule type" value="Genomic_DNA"/>
</dbReference>
<dbReference type="RefSeq" id="YP_001123467.1">
    <property type="nucleotide sequence ID" value="NC_009271.1"/>
</dbReference>
<dbReference type="SMR" id="A4QKT6"/>
<dbReference type="GeneID" id="4962653"/>
<dbReference type="GO" id="GO:0009535">
    <property type="term" value="C:chloroplast thylakoid membrane"/>
    <property type="evidence" value="ECO:0007669"/>
    <property type="project" value="UniProtKB-SubCell"/>
</dbReference>
<dbReference type="GO" id="GO:0030964">
    <property type="term" value="C:NADH dehydrogenase complex"/>
    <property type="evidence" value="ECO:0007669"/>
    <property type="project" value="TreeGrafter"/>
</dbReference>
<dbReference type="GO" id="GO:0008137">
    <property type="term" value="F:NADH dehydrogenase (ubiquinone) activity"/>
    <property type="evidence" value="ECO:0007669"/>
    <property type="project" value="InterPro"/>
</dbReference>
<dbReference type="GO" id="GO:0048038">
    <property type="term" value="F:quinone binding"/>
    <property type="evidence" value="ECO:0007669"/>
    <property type="project" value="UniProtKB-KW"/>
</dbReference>
<dbReference type="GO" id="GO:0019684">
    <property type="term" value="P:photosynthesis, light reaction"/>
    <property type="evidence" value="ECO:0007669"/>
    <property type="project" value="UniProtKB-UniRule"/>
</dbReference>
<dbReference type="FunFam" id="1.20.58.1610:FF:000001">
    <property type="entry name" value="NAD(P)H-quinone oxidoreductase subunit 3, chloroplastic"/>
    <property type="match status" value="1"/>
</dbReference>
<dbReference type="Gene3D" id="1.20.58.1610">
    <property type="entry name" value="NADH:ubiquinone/plastoquinone oxidoreductase, chain 3"/>
    <property type="match status" value="1"/>
</dbReference>
<dbReference type="HAMAP" id="MF_01394">
    <property type="entry name" value="NDH1_NuoA"/>
    <property type="match status" value="1"/>
</dbReference>
<dbReference type="InterPro" id="IPR023043">
    <property type="entry name" value="NAD(P)H_OxRDtase_bac/plastid"/>
</dbReference>
<dbReference type="InterPro" id="IPR000440">
    <property type="entry name" value="NADH_UbQ/plastoQ_OxRdtase_su3"/>
</dbReference>
<dbReference type="InterPro" id="IPR038430">
    <property type="entry name" value="NDAH_ubi_oxred_su3_sf"/>
</dbReference>
<dbReference type="PANTHER" id="PTHR11058">
    <property type="entry name" value="NADH-UBIQUINONE OXIDOREDUCTASE CHAIN 3"/>
    <property type="match status" value="1"/>
</dbReference>
<dbReference type="PANTHER" id="PTHR11058:SF9">
    <property type="entry name" value="NADH-UBIQUINONE OXIDOREDUCTASE CHAIN 3"/>
    <property type="match status" value="1"/>
</dbReference>
<dbReference type="Pfam" id="PF00507">
    <property type="entry name" value="Oxidored_q4"/>
    <property type="match status" value="1"/>
</dbReference>
<comment type="function">
    <text evidence="1">NDH shuttles electrons from NAD(P)H:plastoquinone, via FMN and iron-sulfur (Fe-S) centers, to quinones in the photosynthetic chain and possibly in a chloroplast respiratory chain. The immediate electron acceptor for the enzyme in this species is believed to be plastoquinone. Couples the redox reaction to proton translocation, and thus conserves the redox energy in a proton gradient.</text>
</comment>
<comment type="catalytic activity">
    <reaction evidence="1">
        <text>a plastoquinone + NADH + (n+1) H(+)(in) = a plastoquinol + NAD(+) + n H(+)(out)</text>
        <dbReference type="Rhea" id="RHEA:42608"/>
        <dbReference type="Rhea" id="RHEA-COMP:9561"/>
        <dbReference type="Rhea" id="RHEA-COMP:9562"/>
        <dbReference type="ChEBI" id="CHEBI:15378"/>
        <dbReference type="ChEBI" id="CHEBI:17757"/>
        <dbReference type="ChEBI" id="CHEBI:57540"/>
        <dbReference type="ChEBI" id="CHEBI:57945"/>
        <dbReference type="ChEBI" id="CHEBI:62192"/>
    </reaction>
</comment>
<comment type="catalytic activity">
    <reaction evidence="1">
        <text>a plastoquinone + NADPH + (n+1) H(+)(in) = a plastoquinol + NADP(+) + n H(+)(out)</text>
        <dbReference type="Rhea" id="RHEA:42612"/>
        <dbReference type="Rhea" id="RHEA-COMP:9561"/>
        <dbReference type="Rhea" id="RHEA-COMP:9562"/>
        <dbReference type="ChEBI" id="CHEBI:15378"/>
        <dbReference type="ChEBI" id="CHEBI:17757"/>
        <dbReference type="ChEBI" id="CHEBI:57783"/>
        <dbReference type="ChEBI" id="CHEBI:58349"/>
        <dbReference type="ChEBI" id="CHEBI:62192"/>
    </reaction>
</comment>
<comment type="subunit">
    <text evidence="1">NDH is composed of at least 16 different subunits, 5 of which are encoded in the nucleus.</text>
</comment>
<comment type="subcellular location">
    <subcellularLocation>
        <location evidence="1">Plastid</location>
        <location evidence="1">Chloroplast thylakoid membrane</location>
        <topology evidence="1">Multi-pass membrane protein</topology>
    </subcellularLocation>
</comment>
<comment type="similarity">
    <text evidence="1">Belongs to the complex I subunit 3 family.</text>
</comment>
<keyword id="KW-0150">Chloroplast</keyword>
<keyword id="KW-0472">Membrane</keyword>
<keyword id="KW-0520">NAD</keyword>
<keyword id="KW-0521">NADP</keyword>
<keyword id="KW-0934">Plastid</keyword>
<keyword id="KW-0618">Plastoquinone</keyword>
<keyword id="KW-0874">Quinone</keyword>
<keyword id="KW-0793">Thylakoid</keyword>
<keyword id="KW-1278">Translocase</keyword>
<keyword id="KW-0812">Transmembrane</keyword>
<keyword id="KW-1133">Transmembrane helix</keyword>
<keyword id="KW-0813">Transport</keyword>
<proteinExistence type="inferred from homology"/>
<gene>
    <name evidence="1" type="primary">ndhC</name>
</gene>
<name>NU3C_CRUWA</name>
<reference key="1">
    <citation type="submission" date="2007-03" db="EMBL/GenBank/DDBJ databases">
        <title>Sequencing analysis of Crucihimalaya wallichii chloroplast DNA.</title>
        <authorList>
            <person name="Hosouchi T."/>
            <person name="Tsuruoka H."/>
            <person name="Kotani H."/>
        </authorList>
    </citation>
    <scope>NUCLEOTIDE SEQUENCE [LARGE SCALE GENOMIC DNA]</scope>
</reference>
<accession>A4QKT6</accession>
<protein>
    <recommendedName>
        <fullName evidence="1">NAD(P)H-quinone oxidoreductase subunit 3, chloroplastic</fullName>
        <ecNumber evidence="1">7.1.1.-</ecNumber>
    </recommendedName>
    <alternativeName>
        <fullName evidence="1">NAD(P)H dehydrogenase subunit 3</fullName>
    </alternativeName>
    <alternativeName>
        <fullName evidence="1">NADH-plastoquinone oxidoreductase subunit 3</fullName>
    </alternativeName>
</protein>
<feature type="chain" id="PRO_0000362824" description="NAD(P)H-quinone oxidoreductase subunit 3, chloroplastic">
    <location>
        <begin position="1"/>
        <end position="120"/>
    </location>
</feature>
<feature type="transmembrane region" description="Helical" evidence="1">
    <location>
        <begin position="9"/>
        <end position="29"/>
    </location>
</feature>
<feature type="transmembrane region" description="Helical" evidence="1">
    <location>
        <begin position="64"/>
        <end position="84"/>
    </location>
</feature>
<feature type="transmembrane region" description="Helical" evidence="1">
    <location>
        <begin position="88"/>
        <end position="108"/>
    </location>
</feature>
<evidence type="ECO:0000255" key="1">
    <source>
        <dbReference type="HAMAP-Rule" id="MF_01394"/>
    </source>
</evidence>